<reference key="1">
    <citation type="submission" date="2007-06" db="EMBL/GenBank/DDBJ databases">
        <title>Complete sequence of Clostridium beijerinckii NCIMB 8052.</title>
        <authorList>
            <consortium name="US DOE Joint Genome Institute"/>
            <person name="Copeland A."/>
            <person name="Lucas S."/>
            <person name="Lapidus A."/>
            <person name="Barry K."/>
            <person name="Detter J.C."/>
            <person name="Glavina del Rio T."/>
            <person name="Hammon N."/>
            <person name="Israni S."/>
            <person name="Dalin E."/>
            <person name="Tice H."/>
            <person name="Pitluck S."/>
            <person name="Sims D."/>
            <person name="Brettin T."/>
            <person name="Bruce D."/>
            <person name="Tapia R."/>
            <person name="Brainard J."/>
            <person name="Schmutz J."/>
            <person name="Larimer F."/>
            <person name="Land M."/>
            <person name="Hauser L."/>
            <person name="Kyrpides N."/>
            <person name="Mikhailova N."/>
            <person name="Bennet G."/>
            <person name="Cann I."/>
            <person name="Chen J.-S."/>
            <person name="Contreras A.L."/>
            <person name="Jones D."/>
            <person name="Kashket E."/>
            <person name="Mitchell W."/>
            <person name="Stoddard S."/>
            <person name="Schwarz W."/>
            <person name="Qureshi N."/>
            <person name="Young M."/>
            <person name="Shi Z."/>
            <person name="Ezeji T."/>
            <person name="White B."/>
            <person name="Blaschek H."/>
            <person name="Richardson P."/>
        </authorList>
    </citation>
    <scope>NUCLEOTIDE SEQUENCE [LARGE SCALE GENOMIC DNA]</scope>
    <source>
        <strain>ATCC 51743 / NCIMB 8052</strain>
    </source>
</reference>
<feature type="chain" id="PRO_0000385838" description="GTPase Obg">
    <location>
        <begin position="1"/>
        <end position="430"/>
    </location>
</feature>
<feature type="domain" description="Obg" evidence="3">
    <location>
        <begin position="1"/>
        <end position="158"/>
    </location>
</feature>
<feature type="domain" description="OBG-type G" evidence="1">
    <location>
        <begin position="159"/>
        <end position="331"/>
    </location>
</feature>
<feature type="domain" description="OCT" evidence="2">
    <location>
        <begin position="345"/>
        <end position="430"/>
    </location>
</feature>
<feature type="binding site" evidence="1">
    <location>
        <begin position="165"/>
        <end position="172"/>
    </location>
    <ligand>
        <name>GTP</name>
        <dbReference type="ChEBI" id="CHEBI:37565"/>
    </ligand>
</feature>
<feature type="binding site" evidence="1">
    <location>
        <position position="172"/>
    </location>
    <ligand>
        <name>Mg(2+)</name>
        <dbReference type="ChEBI" id="CHEBI:18420"/>
    </ligand>
</feature>
<feature type="binding site" evidence="1">
    <location>
        <begin position="190"/>
        <end position="194"/>
    </location>
    <ligand>
        <name>GTP</name>
        <dbReference type="ChEBI" id="CHEBI:37565"/>
    </ligand>
</feature>
<feature type="binding site" evidence="1">
    <location>
        <position position="192"/>
    </location>
    <ligand>
        <name>Mg(2+)</name>
        <dbReference type="ChEBI" id="CHEBI:18420"/>
    </ligand>
</feature>
<feature type="binding site" evidence="1">
    <location>
        <begin position="212"/>
        <end position="215"/>
    </location>
    <ligand>
        <name>GTP</name>
        <dbReference type="ChEBI" id="CHEBI:37565"/>
    </ligand>
</feature>
<feature type="binding site" evidence="1">
    <location>
        <begin position="282"/>
        <end position="285"/>
    </location>
    <ligand>
        <name>GTP</name>
        <dbReference type="ChEBI" id="CHEBI:37565"/>
    </ligand>
</feature>
<feature type="binding site" evidence="1">
    <location>
        <begin position="312"/>
        <end position="314"/>
    </location>
    <ligand>
        <name>GTP</name>
        <dbReference type="ChEBI" id="CHEBI:37565"/>
    </ligand>
</feature>
<accession>A6LQR9</accession>
<sequence>MFIDTAKVFVKSGNGGNGAISFRREKYVPLGGPDGGDGGKGGSIIFQVETGITTLLDFKYKKKFIAESGENGGGSKCYGKDGESLYIKVPMGTIIREAETNKIIADLSHKGQELVLLRGGKGGKGNVKFATATKQAPHYAEPGMPGDELNIVLELKLLADVGLLGFPNVGKSTLLSMTTKAKPKIANYHFTTLKPNLGVVAVDGIDPFVMADIPGIIEGAAEGVGLGIQFLRHIERTRLLIHIVDISGVEGRDPFEDFIKINEELKKYSVKLWDRPQIVVANKSDMLYDEGIFEDFKKKVQEMGFDKVFKMSAATNEGVDAVMKEAARILKDIPVKELEISEDEMYIPEEKRFTYDITVEHNKEEGYDVYIVEGTFVDRLLSAVNVNDADSLRYFHKVLRNKGIFDELREMGVKDGDMVRLNDFEFEYIL</sequence>
<keyword id="KW-0963">Cytoplasm</keyword>
<keyword id="KW-0342">GTP-binding</keyword>
<keyword id="KW-0378">Hydrolase</keyword>
<keyword id="KW-0460">Magnesium</keyword>
<keyword id="KW-0479">Metal-binding</keyword>
<keyword id="KW-0547">Nucleotide-binding</keyword>
<name>OBG_CLOB8</name>
<comment type="function">
    <text evidence="1">An essential GTPase which binds GTP, GDP and possibly (p)ppGpp with moderate affinity, with high nucleotide exchange rates and a fairly low GTP hydrolysis rate. Plays a role in control of the cell cycle, stress response, ribosome biogenesis and in those bacteria that undergo differentiation, in morphogenesis control.</text>
</comment>
<comment type="cofactor">
    <cofactor evidence="1">
        <name>Mg(2+)</name>
        <dbReference type="ChEBI" id="CHEBI:18420"/>
    </cofactor>
</comment>
<comment type="subunit">
    <text evidence="1">Monomer.</text>
</comment>
<comment type="subcellular location">
    <subcellularLocation>
        <location evidence="1">Cytoplasm</location>
    </subcellularLocation>
</comment>
<comment type="similarity">
    <text evidence="1">Belongs to the TRAFAC class OBG-HflX-like GTPase superfamily. OBG GTPase family.</text>
</comment>
<dbReference type="EC" id="3.6.5.-" evidence="1"/>
<dbReference type="EMBL" id="CP000721">
    <property type="protein sequence ID" value="ABR32699.1"/>
    <property type="molecule type" value="Genomic_DNA"/>
</dbReference>
<dbReference type="SMR" id="A6LQR9"/>
<dbReference type="KEGG" id="cbe:Cbei_0511"/>
<dbReference type="eggNOG" id="COG0536">
    <property type="taxonomic scope" value="Bacteria"/>
</dbReference>
<dbReference type="HOGENOM" id="CLU_011747_2_1_9"/>
<dbReference type="Proteomes" id="UP000000565">
    <property type="component" value="Chromosome"/>
</dbReference>
<dbReference type="GO" id="GO:0005737">
    <property type="term" value="C:cytoplasm"/>
    <property type="evidence" value="ECO:0007669"/>
    <property type="project" value="UniProtKB-SubCell"/>
</dbReference>
<dbReference type="GO" id="GO:0005525">
    <property type="term" value="F:GTP binding"/>
    <property type="evidence" value="ECO:0007669"/>
    <property type="project" value="UniProtKB-UniRule"/>
</dbReference>
<dbReference type="GO" id="GO:0003924">
    <property type="term" value="F:GTPase activity"/>
    <property type="evidence" value="ECO:0007669"/>
    <property type="project" value="UniProtKB-UniRule"/>
</dbReference>
<dbReference type="GO" id="GO:0000287">
    <property type="term" value="F:magnesium ion binding"/>
    <property type="evidence" value="ECO:0007669"/>
    <property type="project" value="InterPro"/>
</dbReference>
<dbReference type="GO" id="GO:0042254">
    <property type="term" value="P:ribosome biogenesis"/>
    <property type="evidence" value="ECO:0007669"/>
    <property type="project" value="UniProtKB-UniRule"/>
</dbReference>
<dbReference type="CDD" id="cd01898">
    <property type="entry name" value="Obg"/>
    <property type="match status" value="1"/>
</dbReference>
<dbReference type="FunFam" id="2.70.210.12:FF:000001">
    <property type="entry name" value="GTPase Obg"/>
    <property type="match status" value="1"/>
</dbReference>
<dbReference type="Gene3D" id="3.30.300.350">
    <property type="entry name" value="GTP-binding protein OBG, C-terminal domain"/>
    <property type="match status" value="1"/>
</dbReference>
<dbReference type="Gene3D" id="2.70.210.12">
    <property type="entry name" value="GTP1/OBG domain"/>
    <property type="match status" value="1"/>
</dbReference>
<dbReference type="Gene3D" id="3.40.50.300">
    <property type="entry name" value="P-loop containing nucleotide triphosphate hydrolases"/>
    <property type="match status" value="1"/>
</dbReference>
<dbReference type="HAMAP" id="MF_01454">
    <property type="entry name" value="GTPase_Obg"/>
    <property type="match status" value="1"/>
</dbReference>
<dbReference type="InterPro" id="IPR031167">
    <property type="entry name" value="G_OBG"/>
</dbReference>
<dbReference type="InterPro" id="IPR006073">
    <property type="entry name" value="GTP-bd"/>
</dbReference>
<dbReference type="InterPro" id="IPR014100">
    <property type="entry name" value="GTP-bd_Obg/CgtA"/>
</dbReference>
<dbReference type="InterPro" id="IPR036346">
    <property type="entry name" value="GTP-bd_prot_GTP1/OBG_C_sf"/>
</dbReference>
<dbReference type="InterPro" id="IPR006074">
    <property type="entry name" value="GTP1-OBG_CS"/>
</dbReference>
<dbReference type="InterPro" id="IPR006169">
    <property type="entry name" value="GTP1_OBG_dom"/>
</dbReference>
<dbReference type="InterPro" id="IPR036726">
    <property type="entry name" value="GTP1_OBG_dom_sf"/>
</dbReference>
<dbReference type="InterPro" id="IPR045086">
    <property type="entry name" value="OBG_GTPase"/>
</dbReference>
<dbReference type="InterPro" id="IPR015349">
    <property type="entry name" value="OCT_dom"/>
</dbReference>
<dbReference type="InterPro" id="IPR027417">
    <property type="entry name" value="P-loop_NTPase"/>
</dbReference>
<dbReference type="InterPro" id="IPR005225">
    <property type="entry name" value="Small_GTP-bd"/>
</dbReference>
<dbReference type="NCBIfam" id="TIGR02729">
    <property type="entry name" value="Obg_CgtA"/>
    <property type="match status" value="1"/>
</dbReference>
<dbReference type="NCBIfam" id="TIGR03595">
    <property type="entry name" value="Obg_CgtA_exten"/>
    <property type="match status" value="1"/>
</dbReference>
<dbReference type="NCBIfam" id="NF008954">
    <property type="entry name" value="PRK12296.1"/>
    <property type="match status" value="1"/>
</dbReference>
<dbReference type="NCBIfam" id="NF008955">
    <property type="entry name" value="PRK12297.1"/>
    <property type="match status" value="1"/>
</dbReference>
<dbReference type="NCBIfam" id="NF008956">
    <property type="entry name" value="PRK12299.1"/>
    <property type="match status" value="1"/>
</dbReference>
<dbReference type="NCBIfam" id="TIGR00231">
    <property type="entry name" value="small_GTP"/>
    <property type="match status" value="1"/>
</dbReference>
<dbReference type="PANTHER" id="PTHR11702">
    <property type="entry name" value="DEVELOPMENTALLY REGULATED GTP-BINDING PROTEIN-RELATED"/>
    <property type="match status" value="1"/>
</dbReference>
<dbReference type="PANTHER" id="PTHR11702:SF31">
    <property type="entry name" value="MITOCHONDRIAL RIBOSOME-ASSOCIATED GTPASE 2"/>
    <property type="match status" value="1"/>
</dbReference>
<dbReference type="Pfam" id="PF09269">
    <property type="entry name" value="DUF1967"/>
    <property type="match status" value="1"/>
</dbReference>
<dbReference type="Pfam" id="PF01018">
    <property type="entry name" value="GTP1_OBG"/>
    <property type="match status" value="1"/>
</dbReference>
<dbReference type="Pfam" id="PF01926">
    <property type="entry name" value="MMR_HSR1"/>
    <property type="match status" value="1"/>
</dbReference>
<dbReference type="PIRSF" id="PIRSF002401">
    <property type="entry name" value="GTP_bd_Obg/CgtA"/>
    <property type="match status" value="1"/>
</dbReference>
<dbReference type="PRINTS" id="PR00326">
    <property type="entry name" value="GTP1OBG"/>
</dbReference>
<dbReference type="SUPFAM" id="SSF102741">
    <property type="entry name" value="Obg GTP-binding protein C-terminal domain"/>
    <property type="match status" value="1"/>
</dbReference>
<dbReference type="SUPFAM" id="SSF82051">
    <property type="entry name" value="Obg GTP-binding protein N-terminal domain"/>
    <property type="match status" value="1"/>
</dbReference>
<dbReference type="SUPFAM" id="SSF52540">
    <property type="entry name" value="P-loop containing nucleoside triphosphate hydrolases"/>
    <property type="match status" value="1"/>
</dbReference>
<dbReference type="PROSITE" id="PS51710">
    <property type="entry name" value="G_OBG"/>
    <property type="match status" value="1"/>
</dbReference>
<dbReference type="PROSITE" id="PS00905">
    <property type="entry name" value="GTP1_OBG"/>
    <property type="match status" value="1"/>
</dbReference>
<dbReference type="PROSITE" id="PS51883">
    <property type="entry name" value="OBG"/>
    <property type="match status" value="1"/>
</dbReference>
<dbReference type="PROSITE" id="PS51881">
    <property type="entry name" value="OCT"/>
    <property type="match status" value="1"/>
</dbReference>
<protein>
    <recommendedName>
        <fullName evidence="1">GTPase Obg</fullName>
        <ecNumber evidence="1">3.6.5.-</ecNumber>
    </recommendedName>
    <alternativeName>
        <fullName evidence="1">GTP-binding protein Obg</fullName>
    </alternativeName>
</protein>
<organism>
    <name type="scientific">Clostridium beijerinckii (strain ATCC 51743 / NCIMB 8052)</name>
    <name type="common">Clostridium acetobutylicum</name>
    <dbReference type="NCBI Taxonomy" id="290402"/>
    <lineage>
        <taxon>Bacteria</taxon>
        <taxon>Bacillati</taxon>
        <taxon>Bacillota</taxon>
        <taxon>Clostridia</taxon>
        <taxon>Eubacteriales</taxon>
        <taxon>Clostridiaceae</taxon>
        <taxon>Clostridium</taxon>
    </lineage>
</organism>
<gene>
    <name evidence="1" type="primary">obg</name>
    <name type="ordered locus">Cbei_0511</name>
</gene>
<evidence type="ECO:0000255" key="1">
    <source>
        <dbReference type="HAMAP-Rule" id="MF_01454"/>
    </source>
</evidence>
<evidence type="ECO:0000255" key="2">
    <source>
        <dbReference type="PROSITE-ProRule" id="PRU01229"/>
    </source>
</evidence>
<evidence type="ECO:0000255" key="3">
    <source>
        <dbReference type="PROSITE-ProRule" id="PRU01231"/>
    </source>
</evidence>
<proteinExistence type="inferred from homology"/>